<proteinExistence type="evidence at protein level"/>
<keyword id="KW-0002">3D-structure</keyword>
<keyword id="KW-0204">Cytolysis</keyword>
<keyword id="KW-0903">Direct protein sequencing</keyword>
<keyword id="KW-0354">Hemolysis</keyword>
<keyword id="KW-1032">Host cell membrane</keyword>
<keyword id="KW-1043">Host membrane</keyword>
<keyword id="KW-0406">Ion transport</keyword>
<keyword id="KW-0472">Membrane</keyword>
<keyword id="KW-0626">Porin</keyword>
<keyword id="KW-0964">Secreted</keyword>
<keyword id="KW-0800">Toxin</keyword>
<keyword id="KW-0812">Transmembrane</keyword>
<keyword id="KW-1134">Transmembrane beta strand</keyword>
<keyword id="KW-0813">Transport</keyword>
<keyword id="KW-0843">Virulence</keyword>
<keyword id="KW-0865">Zymogen</keyword>
<comment type="function">
    <text evidence="1">Pore-forming toxin that contributes to the virulence of P.entomophila against Drosophila, playing an important role in host intestinal damage and lethality. Displays cytolytic and hemolytic activity.</text>
</comment>
<comment type="subunit">
    <text evidence="1 2">Pro-Monalysin forms a stable donut-like 18-mer complex composed of two disk-shaped nonamers held together by N-terminal swapping of the pro-peptides (PubMed:25847242). After proteolytic cleavage, the inactive 18-mer complex probably dissociates into two disk-shaped active nonamers in which the transmembrane segments are unmasked and ready to engage the conformational change leading to the pore formation into the target membrane (PubMed:25847242). Multimerizes into circular-like structures and barrel-like aggregates (PubMed:21980286).</text>
</comment>
<comment type="subcellular location">
    <subcellularLocation>
        <location evidence="1">Secreted</location>
    </subcellularLocation>
    <subcellularLocation>
        <location evidence="5">Host cell membrane</location>
    </subcellularLocation>
</comment>
<comment type="induction">
    <text evidence="1">Is regulated by both the GacS/GacA two-component system and the Pvf regulator, two signaling systems that control P.entomophila pathogenicity.</text>
</comment>
<comment type="domain">
    <text evidence="6">Monalysin structure belongs to the Aerolysin-like PFTs fold family but is devoid of obvious receptor-binding domain.</text>
</comment>
<comment type="PTM">
    <text evidence="1">Requires N-terminal cleavage to become fully active. The metalloprotease AprA can induce the rapid cleavage of pro-Monalysin into its active form. Can also be processed by trypsin.</text>
</comment>
<comment type="disruption phenotype">
    <text evidence="1">Reduced cell death is observed upon infection with a mutant deficient in Monalysin production. This mutant is affected in its abilities to induce cell damage in the Drosophila gut. It induces lower level of stress and repair pathway activity than wild-type.</text>
</comment>
<reference key="1">
    <citation type="journal article" date="2006" name="Nat. Biotechnol.">
        <title>Complete genome sequence of the entomopathogenic and metabolically versatile soil bacterium Pseudomonas entomophila.</title>
        <authorList>
            <person name="Vodovar N."/>
            <person name="Vallenet D."/>
            <person name="Cruveiller S."/>
            <person name="Rouy Z."/>
            <person name="Barbe V."/>
            <person name="Acosta C."/>
            <person name="Cattolico L."/>
            <person name="Jubin C."/>
            <person name="Lajus A."/>
            <person name="Segurens B."/>
            <person name="Vacherie B."/>
            <person name="Wincker P."/>
            <person name="Weissenbach J."/>
            <person name="Lemaitre B."/>
            <person name="Medigue C."/>
            <person name="Boccard F."/>
        </authorList>
    </citation>
    <scope>NUCLEOTIDE SEQUENCE [LARGE SCALE GENOMIC DNA]</scope>
    <source>
        <strain>L48</strain>
    </source>
</reference>
<reference key="2">
    <citation type="journal article" date="2011" name="PLoS Pathog.">
        <title>Monalysin, a novel beta-pore-forming toxin from the Drosophila pathogen Pseudomonas entomophila, contributes to host intestinal damage and lethality.</title>
        <authorList>
            <person name="Opota O."/>
            <person name="Vallet-Gely I."/>
            <person name="Vincentelli R."/>
            <person name="Kellenberger C."/>
            <person name="Iacovache I."/>
            <person name="Gonzalez M.R."/>
            <person name="Roussel A."/>
            <person name="van der Goot F.G."/>
            <person name="Lemaitre B."/>
        </authorList>
    </citation>
    <scope>PROTEIN SEQUENCE OF 34-39</scope>
    <scope>FUNCTION</scope>
    <scope>SUBCELLULAR LOCATION</scope>
    <scope>DISRUPTION PHENOTYPE</scope>
    <scope>N-TERMINAL PROCESSING</scope>
    <scope>SUBUNIT</scope>
    <scope>INDUCTION</scope>
    <source>
        <strain>L48</strain>
    </source>
</reference>
<reference key="3">
    <citation type="journal article" date="2015" name="J. Biol. Chem.">
        <title>X-ray and cryo-electron microscopy structures of Monalysin pore-forming toxin reveal multimerization of the pro-form.</title>
        <authorList>
            <person name="Leone P."/>
            <person name="Bebeacua C."/>
            <person name="Opota O."/>
            <person name="Kellenberger C."/>
            <person name="Klaholz B."/>
            <person name="Orlov I."/>
            <person name="Cambillau C."/>
            <person name="Lemaitre B."/>
            <person name="Roussel A."/>
        </authorList>
    </citation>
    <scope>X-RAY CRYSTALLOGRAPHY (1.70 ANGSTROMS) OF 9-271 OF THE PRO-FORM OF MONALYSIN; THE CLEAVED FORM AND AN INACTIVE MUTANT LACKING THE MEMBRANE-SPANNING REGION</scope>
    <scope>SUBUNIT</scope>
    <scope>DOMAIN</scope>
    <source>
        <strain>L48</strain>
    </source>
</reference>
<dbReference type="EMBL" id="CT573326">
    <property type="protein sequence ID" value="CAK15937.1"/>
    <property type="molecule type" value="Genomic_DNA"/>
</dbReference>
<dbReference type="RefSeq" id="WP_011534324.1">
    <property type="nucleotide sequence ID" value="NC_008027.1"/>
</dbReference>
<dbReference type="PDB" id="4MJT">
    <property type="method" value="X-ray"/>
    <property type="resolution" value="2.85 A"/>
    <property type="chains" value="A/B/C/D/E/F/G/H/I=36-271, J/K/L/M/N/O/P/Q/R=9-35"/>
</dbReference>
<dbReference type="PDB" id="4MKO">
    <property type="method" value="X-ray"/>
    <property type="resolution" value="1.70 A"/>
    <property type="chains" value="A/B/C/D=36-271"/>
</dbReference>
<dbReference type="PDB" id="4MKQ">
    <property type="method" value="X-ray"/>
    <property type="resolution" value="2.65 A"/>
    <property type="chains" value="A/B=36-101, A/B=171-271, C/D=9-35"/>
</dbReference>
<dbReference type="PDBsum" id="4MJT"/>
<dbReference type="PDBsum" id="4MKO"/>
<dbReference type="PDBsum" id="4MKQ"/>
<dbReference type="SMR" id="Q1I8U1"/>
<dbReference type="STRING" id="384676.PSEEN3174"/>
<dbReference type="TCDB" id="1.C.59.3.1">
    <property type="family name" value="the clostridium perfringens enterotoxin (cpe) family"/>
</dbReference>
<dbReference type="GeneID" id="32806274"/>
<dbReference type="KEGG" id="pen:PSEEN3174"/>
<dbReference type="eggNOG" id="ENOG5034BB4">
    <property type="taxonomic scope" value="Bacteria"/>
</dbReference>
<dbReference type="HOGENOM" id="CLU_1160292_0_0_6"/>
<dbReference type="OrthoDB" id="6866395at2"/>
<dbReference type="EvolutionaryTrace" id="Q1I8U1"/>
<dbReference type="Proteomes" id="UP000000658">
    <property type="component" value="Chromosome"/>
</dbReference>
<dbReference type="GO" id="GO:0005576">
    <property type="term" value="C:extracellular region"/>
    <property type="evidence" value="ECO:0007669"/>
    <property type="project" value="UniProtKB-SubCell"/>
</dbReference>
<dbReference type="GO" id="GO:0020002">
    <property type="term" value="C:host cell plasma membrane"/>
    <property type="evidence" value="ECO:0007669"/>
    <property type="project" value="UniProtKB-SubCell"/>
</dbReference>
<dbReference type="GO" id="GO:0046930">
    <property type="term" value="C:pore complex"/>
    <property type="evidence" value="ECO:0000314"/>
    <property type="project" value="UniProtKB"/>
</dbReference>
<dbReference type="GO" id="GO:0015288">
    <property type="term" value="F:porin activity"/>
    <property type="evidence" value="ECO:0007669"/>
    <property type="project" value="UniProtKB-KW"/>
</dbReference>
<dbReference type="GO" id="GO:0090729">
    <property type="term" value="F:toxin activity"/>
    <property type="evidence" value="ECO:0000314"/>
    <property type="project" value="UniProtKB"/>
</dbReference>
<dbReference type="GO" id="GO:0044179">
    <property type="term" value="P:hemolysis in another organism"/>
    <property type="evidence" value="ECO:0000314"/>
    <property type="project" value="UniProtKB"/>
</dbReference>
<dbReference type="GO" id="GO:0006811">
    <property type="term" value="P:monoatomic ion transport"/>
    <property type="evidence" value="ECO:0007669"/>
    <property type="project" value="UniProtKB-KW"/>
</dbReference>
<dbReference type="GO" id="GO:0051260">
    <property type="term" value="P:protein homooligomerization"/>
    <property type="evidence" value="ECO:0000314"/>
    <property type="project" value="UniProtKB"/>
</dbReference>
<dbReference type="CDD" id="cd17904">
    <property type="entry name" value="PFM_monalysin-like"/>
    <property type="match status" value="1"/>
</dbReference>
<dbReference type="InterPro" id="IPR040927">
    <property type="entry name" value="BB_PF"/>
</dbReference>
<dbReference type="NCBIfam" id="NF033381">
    <property type="entry name" value="MonaBetaBRL_TX"/>
    <property type="match status" value="1"/>
</dbReference>
<dbReference type="Pfam" id="PF18063">
    <property type="entry name" value="BB_PF"/>
    <property type="match status" value="1"/>
</dbReference>
<dbReference type="SUPFAM" id="SSF56973">
    <property type="entry name" value="Aerolisin/ETX pore-forming domain"/>
    <property type="match status" value="1"/>
</dbReference>
<sequence>MTIKEELGQPQSHSIELDEVSKEAASTRAALTSNLSGRFDQYPTKKGDFAIDGYLLDYSSPKQGCWVDGITVYGDIYIGKQNWGTYTRPVFAYLQYVETISIPQNVTTTLSYQLTKGHTRSFETSVNAKYSVGANIDIVNVGSEISTGFTRSESWSTTQSFTDTTEMKGPGTFVIYQVVLVYAHNATSAGRQNANAFAYSKTQAVGSRVDLYYLSAITQRKRVIVPSSNAVTPLDWDTVQRNVLMENYNPGSNSGHFSFDWSAYNDPHRRY</sequence>
<protein>
    <recommendedName>
        <fullName evidence="3">Monalysin</fullName>
    </recommendedName>
    <alternativeName>
        <fullName evidence="4">beta-barrel pore-forming toxin</fullName>
        <shortName evidence="4">beta-PFT</shortName>
    </alternativeName>
</protein>
<organism>
    <name type="scientific">Pseudomonas entomophila (strain L48)</name>
    <dbReference type="NCBI Taxonomy" id="384676"/>
    <lineage>
        <taxon>Bacteria</taxon>
        <taxon>Pseudomonadati</taxon>
        <taxon>Pseudomonadota</taxon>
        <taxon>Gammaproteobacteria</taxon>
        <taxon>Pseudomonadales</taxon>
        <taxon>Pseudomonadaceae</taxon>
        <taxon>Pseudomonas</taxon>
    </lineage>
</organism>
<feature type="propeptide" id="PRO_0000439889" evidence="1">
    <location>
        <begin position="1"/>
        <end position="33"/>
    </location>
</feature>
<feature type="chain" id="PRO_0000439890" description="Monalysin">
    <location>
        <begin position="34"/>
        <end position="271"/>
    </location>
</feature>
<feature type="region of interest" description="Pore-forming domain" evidence="6">
    <location>
        <begin position="102"/>
        <end position="170"/>
    </location>
</feature>
<feature type="helix" evidence="9">
    <location>
        <begin position="39"/>
        <end position="41"/>
    </location>
</feature>
<feature type="helix" evidence="9">
    <location>
        <begin position="47"/>
        <end position="55"/>
    </location>
</feature>
<feature type="strand" evidence="10">
    <location>
        <begin position="58"/>
        <end position="60"/>
    </location>
</feature>
<feature type="strand" evidence="9">
    <location>
        <begin position="64"/>
        <end position="67"/>
    </location>
</feature>
<feature type="strand" evidence="9">
    <location>
        <begin position="72"/>
        <end position="78"/>
    </location>
</feature>
<feature type="strand" evidence="9">
    <location>
        <begin position="81"/>
        <end position="102"/>
    </location>
</feature>
<feature type="strand" evidence="9">
    <location>
        <begin position="107"/>
        <end position="118"/>
    </location>
</feature>
<feature type="helix" evidence="9">
    <location>
        <begin position="120"/>
        <end position="125"/>
    </location>
</feature>
<feature type="strand" evidence="8">
    <location>
        <begin position="130"/>
        <end position="132"/>
    </location>
</feature>
<feature type="helix" evidence="9">
    <location>
        <begin position="134"/>
        <end position="137"/>
    </location>
</feature>
<feature type="helix" evidence="9">
    <location>
        <begin position="138"/>
        <end position="142"/>
    </location>
</feature>
<feature type="turn" evidence="9">
    <location>
        <begin position="151"/>
        <end position="155"/>
    </location>
</feature>
<feature type="strand" evidence="9">
    <location>
        <begin position="159"/>
        <end position="186"/>
    </location>
</feature>
<feature type="turn" evidence="9">
    <location>
        <begin position="187"/>
        <end position="192"/>
    </location>
</feature>
<feature type="strand" evidence="9">
    <location>
        <begin position="196"/>
        <end position="205"/>
    </location>
</feature>
<feature type="strand" evidence="9">
    <location>
        <begin position="208"/>
        <end position="226"/>
    </location>
</feature>
<feature type="helix" evidence="9">
    <location>
        <begin position="227"/>
        <end position="229"/>
    </location>
</feature>
<feature type="helix" evidence="9">
    <location>
        <begin position="236"/>
        <end position="243"/>
    </location>
</feature>
<feature type="turn" evidence="9">
    <location>
        <begin position="244"/>
        <end position="247"/>
    </location>
</feature>
<feature type="turn" evidence="9">
    <location>
        <begin position="250"/>
        <end position="253"/>
    </location>
</feature>
<feature type="strand" evidence="9">
    <location>
        <begin position="254"/>
        <end position="256"/>
    </location>
</feature>
<feature type="helix" evidence="9">
    <location>
        <begin position="261"/>
        <end position="265"/>
    </location>
</feature>
<feature type="helix" evidence="9">
    <location>
        <begin position="267"/>
        <end position="269"/>
    </location>
</feature>
<gene>
    <name evidence="3" type="primary">mnl</name>
    <name evidence="7" type="ordered locus">PSEEN3174</name>
</gene>
<name>MONAL_PSEE4</name>
<accession>Q1I8U1</accession>
<evidence type="ECO:0000269" key="1">
    <source>
    </source>
</evidence>
<evidence type="ECO:0000269" key="2">
    <source>
    </source>
</evidence>
<evidence type="ECO:0000303" key="3">
    <source>
    </source>
</evidence>
<evidence type="ECO:0000303" key="4">
    <source>
    </source>
</evidence>
<evidence type="ECO:0000305" key="5">
    <source>
    </source>
</evidence>
<evidence type="ECO:0000305" key="6">
    <source>
    </source>
</evidence>
<evidence type="ECO:0000312" key="7">
    <source>
        <dbReference type="EMBL" id="CAK15937.1"/>
    </source>
</evidence>
<evidence type="ECO:0007829" key="8">
    <source>
        <dbReference type="PDB" id="4MJT"/>
    </source>
</evidence>
<evidence type="ECO:0007829" key="9">
    <source>
        <dbReference type="PDB" id="4MKO"/>
    </source>
</evidence>
<evidence type="ECO:0007829" key="10">
    <source>
        <dbReference type="PDB" id="4MKQ"/>
    </source>
</evidence>